<name>SEC13_CHATD</name>
<proteinExistence type="inferred from homology"/>
<reference key="1">
    <citation type="journal article" date="2011" name="Cell">
        <title>Insight into structure and assembly of the nuclear pore complex by utilizing the genome of a eukaryotic thermophile.</title>
        <authorList>
            <person name="Amlacher S."/>
            <person name="Sarges P."/>
            <person name="Flemming D."/>
            <person name="van Noort V."/>
            <person name="Kunze R."/>
            <person name="Devos D.P."/>
            <person name="Arumugam M."/>
            <person name="Bork P."/>
            <person name="Hurt E."/>
        </authorList>
    </citation>
    <scope>NUCLEOTIDE SEQUENCE [LARGE SCALE GENOMIC DNA]</scope>
    <source>
        <strain>DSM 1495 / CBS 144.50 / IMI 039719</strain>
    </source>
</reference>
<keyword id="KW-0509">mRNA transport</keyword>
<keyword id="KW-0906">Nuclear pore complex</keyword>
<keyword id="KW-0539">Nucleus</keyword>
<keyword id="KW-0653">Protein transport</keyword>
<keyword id="KW-1185">Reference proteome</keyword>
<keyword id="KW-0677">Repeat</keyword>
<keyword id="KW-0811">Translocation</keyword>
<keyword id="KW-0813">Transport</keyword>
<keyword id="KW-0853">WD repeat</keyword>
<protein>
    <recommendedName>
        <fullName evidence="3">Protein transport protein SEC13</fullName>
    </recommendedName>
</protein>
<feature type="chain" id="PRO_0000433192" description="Protein transport protein SEC13">
    <location>
        <begin position="1"/>
        <end position="308"/>
    </location>
</feature>
<feature type="repeat" description="WD 1" evidence="2">
    <location>
        <begin position="15"/>
        <end position="54"/>
    </location>
</feature>
<feature type="repeat" description="WD 2" evidence="2">
    <location>
        <begin position="59"/>
        <end position="100"/>
    </location>
</feature>
<feature type="repeat" description="WD 3" evidence="2">
    <location>
        <begin position="105"/>
        <end position="146"/>
    </location>
</feature>
<feature type="repeat" description="WD 4" evidence="2">
    <location>
        <begin position="151"/>
        <end position="207"/>
    </location>
</feature>
<feature type="repeat" description="WD 5" evidence="2">
    <location>
        <begin position="215"/>
        <end position="257"/>
    </location>
</feature>
<feature type="repeat" description="WD 6" evidence="2">
    <location>
        <begin position="263"/>
        <end position="302"/>
    </location>
</feature>
<feature type="sequence conflict" description="In Ref. 1; EGS19632." evidence="4" ref="1">
    <original>MSQQ</original>
    <variation>MVRKTTQTTCPVSVLGCSIVCWAARMSP</variation>
    <location>
        <begin position="1"/>
        <end position="4"/>
    </location>
</feature>
<dbReference type="EMBL" id="GL988043">
    <property type="protein sequence ID" value="EGS19632.1"/>
    <property type="molecule type" value="Genomic_DNA"/>
</dbReference>
<dbReference type="EMBL" id="JF276293">
    <property type="protein sequence ID" value="AEL00687.1"/>
    <property type="molecule type" value="Genomic_DNA"/>
</dbReference>
<dbReference type="RefSeq" id="XP_006694517.1">
    <property type="nucleotide sequence ID" value="XM_006694454.1"/>
</dbReference>
<dbReference type="SMR" id="G0SA60"/>
<dbReference type="DIP" id="DIP-60575N"/>
<dbReference type="IntAct" id="G0SA60">
    <property type="interactions" value="3"/>
</dbReference>
<dbReference type="STRING" id="759272.G0SA60"/>
<dbReference type="TCDB" id="1.I.1.1.2">
    <property type="family name" value="the nuclear pore complex (npc) family"/>
</dbReference>
<dbReference type="GeneID" id="18258149"/>
<dbReference type="KEGG" id="cthr:CTHT_0041110"/>
<dbReference type="eggNOG" id="KOG1332">
    <property type="taxonomic scope" value="Eukaryota"/>
</dbReference>
<dbReference type="HOGENOM" id="CLU_032441_0_1_1"/>
<dbReference type="OrthoDB" id="364224at2759"/>
<dbReference type="Proteomes" id="UP000008066">
    <property type="component" value="Unassembled WGS sequence"/>
</dbReference>
<dbReference type="GO" id="GO:0030127">
    <property type="term" value="C:COPII vesicle coat"/>
    <property type="evidence" value="ECO:0007669"/>
    <property type="project" value="TreeGrafter"/>
</dbReference>
<dbReference type="GO" id="GO:0031080">
    <property type="term" value="C:nuclear pore outer ring"/>
    <property type="evidence" value="ECO:0007669"/>
    <property type="project" value="TreeGrafter"/>
</dbReference>
<dbReference type="GO" id="GO:0005198">
    <property type="term" value="F:structural molecule activity"/>
    <property type="evidence" value="ECO:0007669"/>
    <property type="project" value="InterPro"/>
</dbReference>
<dbReference type="GO" id="GO:0090114">
    <property type="term" value="P:COPII-coated vesicle budding"/>
    <property type="evidence" value="ECO:0007669"/>
    <property type="project" value="TreeGrafter"/>
</dbReference>
<dbReference type="GO" id="GO:0051028">
    <property type="term" value="P:mRNA transport"/>
    <property type="evidence" value="ECO:0007669"/>
    <property type="project" value="UniProtKB-KW"/>
</dbReference>
<dbReference type="GO" id="GO:0032008">
    <property type="term" value="P:positive regulation of TOR signaling"/>
    <property type="evidence" value="ECO:0007669"/>
    <property type="project" value="TreeGrafter"/>
</dbReference>
<dbReference type="GO" id="GO:0032527">
    <property type="term" value="P:protein exit from endoplasmic reticulum"/>
    <property type="evidence" value="ECO:0007669"/>
    <property type="project" value="TreeGrafter"/>
</dbReference>
<dbReference type="GO" id="GO:0006606">
    <property type="term" value="P:protein import into nucleus"/>
    <property type="evidence" value="ECO:0007669"/>
    <property type="project" value="TreeGrafter"/>
</dbReference>
<dbReference type="FunFam" id="2.130.10.10:FF:000017">
    <property type="entry name" value="SEC13 homolog (S. cerevisiae)"/>
    <property type="match status" value="1"/>
</dbReference>
<dbReference type="Gene3D" id="2.130.10.10">
    <property type="entry name" value="YVTN repeat-like/Quinoprotein amine dehydrogenase"/>
    <property type="match status" value="1"/>
</dbReference>
<dbReference type="InterPro" id="IPR020472">
    <property type="entry name" value="G-protein_beta_WD-40_rep"/>
</dbReference>
<dbReference type="InterPro" id="IPR037363">
    <property type="entry name" value="Sec13/Seh1_fam"/>
</dbReference>
<dbReference type="InterPro" id="IPR015943">
    <property type="entry name" value="WD40/YVTN_repeat-like_dom_sf"/>
</dbReference>
<dbReference type="InterPro" id="IPR036322">
    <property type="entry name" value="WD40_repeat_dom_sf"/>
</dbReference>
<dbReference type="InterPro" id="IPR001680">
    <property type="entry name" value="WD40_rpt"/>
</dbReference>
<dbReference type="PANTHER" id="PTHR11024">
    <property type="entry name" value="NUCLEAR PORE COMPLEX PROTEIN SEC13 / SEH1 FAMILY MEMBER"/>
    <property type="match status" value="1"/>
</dbReference>
<dbReference type="PANTHER" id="PTHR11024:SF2">
    <property type="entry name" value="PROTEIN SEC13 HOMOLOG"/>
    <property type="match status" value="1"/>
</dbReference>
<dbReference type="Pfam" id="PF00400">
    <property type="entry name" value="WD40"/>
    <property type="match status" value="6"/>
</dbReference>
<dbReference type="PRINTS" id="PR00320">
    <property type="entry name" value="GPROTEINBRPT"/>
</dbReference>
<dbReference type="SMART" id="SM00320">
    <property type="entry name" value="WD40"/>
    <property type="match status" value="6"/>
</dbReference>
<dbReference type="SUPFAM" id="SSF50978">
    <property type="entry name" value="WD40 repeat-like"/>
    <property type="match status" value="1"/>
</dbReference>
<dbReference type="PROSITE" id="PS50082">
    <property type="entry name" value="WD_REPEATS_2"/>
    <property type="match status" value="2"/>
</dbReference>
<dbReference type="PROSITE" id="PS50294">
    <property type="entry name" value="WD_REPEATS_REGION"/>
    <property type="match status" value="1"/>
</dbReference>
<comment type="function">
    <text evidence="1">Component of the coat protein complex II (COPII) which promotes the formation of transport vesicles from the endoplasmic reticulum (ER). The coat has two main functions, the physical deformation of the endoplasmic reticulum membrane into vesicles and the selection of cargo molecules. It also functions as a component of the nuclear pore complex (NPC). NPC components, collectively referred to as nucleoporins (NUPs), can play the role of both NPC structural components and of docking or interaction partners for transiently associated nuclear transport factors. SEC13 is required for efficient mRNA export from the nucleus to the cytoplasm and for correct nuclear pore biogenesis and distribution (By similarity).</text>
</comment>
<comment type="subunit">
    <text evidence="1 5">The COPII coat is composed of at least 5 proteins: the SEC23/24 complex, the SEC13/31 complex, and the protein SAR1. Component of the nuclear pore complex (NPC). NPC constitutes the exclusive means of nucleocytoplasmic transport. NPCs allow the passive diffusion of ions and small molecules and the active, nuclear transport receptor-mediated bidirectional transport of macromolecules such as proteins, RNAs, ribonucleoparticles (RNPs), and ribosomal subunits across the nuclear envelope. Due to its 8-fold rotational symmetry, all subunits are present with 8 copies or multiples thereof.</text>
</comment>
<comment type="subcellular location">
    <subcellularLocation>
        <location evidence="1">Nucleus</location>
        <location evidence="1">Nuclear pore complex</location>
    </subcellularLocation>
</comment>
<comment type="similarity">
    <text evidence="4">Belongs to the WD repeat SEC13 family.</text>
</comment>
<evidence type="ECO:0000250" key="1">
    <source>
        <dbReference type="UniProtKB" id="Q04491"/>
    </source>
</evidence>
<evidence type="ECO:0000255" key="2"/>
<evidence type="ECO:0000303" key="3">
    <source>
    </source>
</evidence>
<evidence type="ECO:0000305" key="4"/>
<evidence type="ECO:0000305" key="5">
    <source>
    </source>
</evidence>
<accession>G0SA60</accession>
<accession>G0ZGU9</accession>
<organism>
    <name type="scientific">Chaetomium thermophilum (strain DSM 1495 / CBS 144.50 / IMI 039719)</name>
    <name type="common">Thermochaetoides thermophila</name>
    <dbReference type="NCBI Taxonomy" id="759272"/>
    <lineage>
        <taxon>Eukaryota</taxon>
        <taxon>Fungi</taxon>
        <taxon>Dikarya</taxon>
        <taxon>Ascomycota</taxon>
        <taxon>Pezizomycotina</taxon>
        <taxon>Sordariomycetes</taxon>
        <taxon>Sordariomycetidae</taxon>
        <taxon>Sordariales</taxon>
        <taxon>Chaetomiaceae</taxon>
        <taxon>Thermochaetoides</taxon>
    </lineage>
</organism>
<gene>
    <name type="primary">SEC13</name>
    <name type="ORF">CTHT_0041110</name>
</gene>
<sequence length="308" mass="33846">MSQQASGAQVITNSGHDDMIHDAVLDYYGRRLATCSSDRTIKIFEIDGDSQRLTETLKGHDGAVWCVSWAHPKYGNILASAGYDGKVFIWRELNGAWSRIYDFALHKASVNVVSWAPHEAGCLLACASSDGSVSVLEFKDNSTWDYVIFPAHGLGVNSVSWAPATSPGSIVSSKPGPKATGNRRFVTGGSDNTLKIWAYDPATNTYKMEREPLTGHTDWVRDVAWSPTVLQKSYIASASQDGTVRIWTSDPANPLAWNCKVLHFDSALWRVSWSLSGNVLAVSGSDNKVTLWKENLKGEWECVKTIEE</sequence>